<accession>Q8TCZ2</accession>
<accession>A8K2D5</accession>
<accession>A8K5R0</accession>
<accession>B3KWG2</accession>
<accession>B4DDL7</accession>
<accession>E7EMK5</accession>
<accession>E9PD27</accession>
<accession>Q8TAW2</accession>
<accession>Q8TCZ0</accession>
<accession>Q8TCZ1</accession>
<accession>Q9BQG9</accession>
<gene>
    <name type="primary">CD99L2</name>
    <name type="synonym">MIC2L1</name>
    <name type="ORF">UNQ1964/PRO4486</name>
</gene>
<evidence type="ECO:0000250" key="1"/>
<evidence type="ECO:0000255" key="2"/>
<evidence type="ECO:0000256" key="3">
    <source>
        <dbReference type="SAM" id="MobiDB-lite"/>
    </source>
</evidence>
<evidence type="ECO:0000269" key="4">
    <source>
    </source>
</evidence>
<evidence type="ECO:0000269" key="5">
    <source>
    </source>
</evidence>
<evidence type="ECO:0000303" key="6">
    <source>
    </source>
</evidence>
<evidence type="ECO:0000303" key="7">
    <source>
    </source>
</evidence>
<evidence type="ECO:0000303" key="8">
    <source>
    </source>
</evidence>
<evidence type="ECO:0000305" key="9"/>
<organism>
    <name type="scientific">Homo sapiens</name>
    <name type="common">Human</name>
    <dbReference type="NCBI Taxonomy" id="9606"/>
    <lineage>
        <taxon>Eukaryota</taxon>
        <taxon>Metazoa</taxon>
        <taxon>Chordata</taxon>
        <taxon>Craniata</taxon>
        <taxon>Vertebrata</taxon>
        <taxon>Euteleostomi</taxon>
        <taxon>Mammalia</taxon>
        <taxon>Eutheria</taxon>
        <taxon>Euarchontoglires</taxon>
        <taxon>Primates</taxon>
        <taxon>Haplorrhini</taxon>
        <taxon>Catarrhini</taxon>
        <taxon>Hominidae</taxon>
        <taxon>Homo</taxon>
    </lineage>
</organism>
<keyword id="KW-0025">Alternative splicing</keyword>
<keyword id="KW-0130">Cell adhesion</keyword>
<keyword id="KW-0965">Cell junction</keyword>
<keyword id="KW-1003">Cell membrane</keyword>
<keyword id="KW-0325">Glycoprotein</keyword>
<keyword id="KW-0472">Membrane</keyword>
<keyword id="KW-0654">Proteoglycan</keyword>
<keyword id="KW-1267">Proteomics identification</keyword>
<keyword id="KW-1185">Reference proteome</keyword>
<keyword id="KW-0964">Secreted</keyword>
<keyword id="KW-0732">Signal</keyword>
<keyword id="KW-0812">Transmembrane</keyword>
<keyword id="KW-1133">Transmembrane helix</keyword>
<name>C99L2_HUMAN</name>
<proteinExistence type="evidence at protein level"/>
<sequence length="262" mass="27986">MVAWRSAFLVCLAFSLATLVQRGSGDFDDFNLEDAVKETSSVKQPWDHTTTTTTNRPGTTRAPAKPPGSGLDLADALDDQDDGRRKPGIGGRERWNHVTTTTKRPVTTRAPANTLGNDFDLADALDDRNDRDDGRRKPIAGGGGFSDKDLEDIVGGGEYKPDKGKGDGRYGSNDDPGSGMVAEPGTIAGVASALAMALIGAVSSYISYQQKKFCFSIQQGLNADYVKGENLEAVVCEEPQVKYSTLHTQSAEPPPPPEPARI</sequence>
<protein>
    <recommendedName>
        <fullName>CD99 antigen-like protein 2</fullName>
    </recommendedName>
    <alternativeName>
        <fullName>MIC2-like protein 1</fullName>
    </alternativeName>
    <cdAntigenName>CD99</cdAntigenName>
</protein>
<dbReference type="EMBL" id="AY078165">
    <property type="protein sequence ID" value="AAL86617.1"/>
    <property type="molecule type" value="mRNA"/>
</dbReference>
<dbReference type="EMBL" id="AY078166">
    <property type="protein sequence ID" value="AAL86618.1"/>
    <property type="molecule type" value="mRNA"/>
</dbReference>
<dbReference type="EMBL" id="AY078167">
    <property type="protein sequence ID" value="AAL86619.1"/>
    <property type="molecule type" value="mRNA"/>
</dbReference>
<dbReference type="EMBL" id="AL136580">
    <property type="protein sequence ID" value="CAB66515.1"/>
    <property type="status" value="ALT_FRAME"/>
    <property type="molecule type" value="mRNA"/>
</dbReference>
<dbReference type="EMBL" id="AY358837">
    <property type="protein sequence ID" value="AAQ89196.1"/>
    <property type="molecule type" value="mRNA"/>
</dbReference>
<dbReference type="EMBL" id="AK290200">
    <property type="protein sequence ID" value="BAF82889.1"/>
    <property type="molecule type" value="mRNA"/>
</dbReference>
<dbReference type="EMBL" id="AK291375">
    <property type="protein sequence ID" value="BAF84064.1"/>
    <property type="molecule type" value="mRNA"/>
</dbReference>
<dbReference type="EMBL" id="AK293244">
    <property type="protein sequence ID" value="BAG56778.1"/>
    <property type="molecule type" value="mRNA"/>
</dbReference>
<dbReference type="EMBL" id="AK125020">
    <property type="protein sequence ID" value="BAG54124.1"/>
    <property type="molecule type" value="mRNA"/>
</dbReference>
<dbReference type="EMBL" id="AF002223">
    <property type="status" value="NOT_ANNOTATED_CDS"/>
    <property type="molecule type" value="Genomic_DNA"/>
</dbReference>
<dbReference type="EMBL" id="AF274573">
    <property type="status" value="NOT_ANNOTATED_CDS"/>
    <property type="molecule type" value="Genomic_DNA"/>
</dbReference>
<dbReference type="EMBL" id="CH471169">
    <property type="protein sequence ID" value="EAW99391.1"/>
    <property type="molecule type" value="Genomic_DNA"/>
</dbReference>
<dbReference type="EMBL" id="CH471169">
    <property type="protein sequence ID" value="EAW99392.1"/>
    <property type="molecule type" value="Genomic_DNA"/>
</dbReference>
<dbReference type="EMBL" id="CH471169">
    <property type="protein sequence ID" value="EAW99393.1"/>
    <property type="molecule type" value="Genomic_DNA"/>
</dbReference>
<dbReference type="EMBL" id="CH471169">
    <property type="protein sequence ID" value="EAW99395.1"/>
    <property type="molecule type" value="Genomic_DNA"/>
</dbReference>
<dbReference type="EMBL" id="BC025729">
    <property type="protein sequence ID" value="AAH25729.1"/>
    <property type="molecule type" value="mRNA"/>
</dbReference>
<dbReference type="EMBL" id="BC030536">
    <property type="protein sequence ID" value="AAH30536.1"/>
    <property type="molecule type" value="mRNA"/>
</dbReference>
<dbReference type="CCDS" id="CCDS14697.1">
    <molecule id="Q8TCZ2-3"/>
</dbReference>
<dbReference type="CCDS" id="CCDS14698.1">
    <molecule id="Q8TCZ2-2"/>
</dbReference>
<dbReference type="CCDS" id="CCDS35427.1">
    <molecule id="Q8TCZ2-1"/>
</dbReference>
<dbReference type="CCDS" id="CCDS55527.1">
    <molecule id="Q8TCZ2-6"/>
</dbReference>
<dbReference type="CCDS" id="CCDS76044.1">
    <molecule id="Q8TCZ2-5"/>
</dbReference>
<dbReference type="RefSeq" id="NP_001171737.1">
    <molecule id="Q8TCZ2-6"/>
    <property type="nucleotide sequence ID" value="NM_001184808.2"/>
</dbReference>
<dbReference type="RefSeq" id="NP_001229543.1">
    <molecule id="Q8TCZ2-5"/>
    <property type="nucleotide sequence ID" value="NM_001242614.2"/>
</dbReference>
<dbReference type="RefSeq" id="NP_113650.2">
    <molecule id="Q8TCZ2-1"/>
    <property type="nucleotide sequence ID" value="NM_031462.4"/>
</dbReference>
<dbReference type="RefSeq" id="NP_604394.1">
    <molecule id="Q8TCZ2-3"/>
    <property type="nucleotide sequence ID" value="NM_134445.4"/>
</dbReference>
<dbReference type="RefSeq" id="NP_604395.1">
    <molecule id="Q8TCZ2-2"/>
    <property type="nucleotide sequence ID" value="NM_134446.4"/>
</dbReference>
<dbReference type="RefSeq" id="XP_011529504.1">
    <property type="nucleotide sequence ID" value="XM_011531202.2"/>
</dbReference>
<dbReference type="BioGRID" id="123726">
    <property type="interactions" value="49"/>
</dbReference>
<dbReference type="FunCoup" id="Q8TCZ2">
    <property type="interactions" value="546"/>
</dbReference>
<dbReference type="IntAct" id="Q8TCZ2">
    <property type="interactions" value="34"/>
</dbReference>
<dbReference type="STRING" id="9606.ENSP00000480322"/>
<dbReference type="GlyCosmos" id="Q8TCZ2">
    <property type="glycosylation" value="2 sites, 2 glycans"/>
</dbReference>
<dbReference type="GlyGen" id="Q8TCZ2">
    <property type="glycosylation" value="12 sites, 4 O-linked glycans (11 sites)"/>
</dbReference>
<dbReference type="iPTMnet" id="Q8TCZ2"/>
<dbReference type="PhosphoSitePlus" id="Q8TCZ2"/>
<dbReference type="SwissPalm" id="Q8TCZ2"/>
<dbReference type="BioMuta" id="CD99L2"/>
<dbReference type="DMDM" id="74730601"/>
<dbReference type="jPOST" id="Q8TCZ2"/>
<dbReference type="MassIVE" id="Q8TCZ2"/>
<dbReference type="PaxDb" id="9606-ENSP00000480322"/>
<dbReference type="PeptideAtlas" id="Q8TCZ2"/>
<dbReference type="ProteomicsDB" id="19570"/>
<dbReference type="ProteomicsDB" id="74199">
    <molecule id="Q8TCZ2-1"/>
</dbReference>
<dbReference type="ProteomicsDB" id="74200">
    <molecule id="Q8TCZ2-2"/>
</dbReference>
<dbReference type="ProteomicsDB" id="74201">
    <molecule id="Q8TCZ2-3"/>
</dbReference>
<dbReference type="ProteomicsDB" id="74203">
    <molecule id="Q8TCZ2-5"/>
</dbReference>
<dbReference type="Pumba" id="Q8TCZ2"/>
<dbReference type="TopDownProteomics" id="Q8TCZ2-1">
    <molecule id="Q8TCZ2-1"/>
</dbReference>
<dbReference type="Antibodypedia" id="50585">
    <property type="antibodies" value="170 antibodies from 23 providers"/>
</dbReference>
<dbReference type="DNASU" id="83692"/>
<dbReference type="Ensembl" id="ENST00000346693.8">
    <molecule id="Q8TCZ2-4"/>
    <property type="protein sequence ID" value="ENSP00000489222.1"/>
    <property type="gene ID" value="ENSG00000102181.22"/>
</dbReference>
<dbReference type="Ensembl" id="ENST00000355149.8">
    <molecule id="Q8TCZ2-3"/>
    <property type="protein sequence ID" value="ENSP00000347275.3"/>
    <property type="gene ID" value="ENSG00000102181.22"/>
</dbReference>
<dbReference type="Ensembl" id="ENST00000370377.8">
    <molecule id="Q8TCZ2-1"/>
    <property type="protein sequence ID" value="ENSP00000359403.3"/>
    <property type="gene ID" value="ENSG00000102181.22"/>
</dbReference>
<dbReference type="Ensembl" id="ENST00000437787.6">
    <molecule id="Q8TCZ2-6"/>
    <property type="protein sequence ID" value="ENSP00000394858.2"/>
    <property type="gene ID" value="ENSG00000102181.22"/>
</dbReference>
<dbReference type="Ensembl" id="ENST00000466436.5">
    <molecule id="Q8TCZ2-2"/>
    <property type="protein sequence ID" value="ENSP00000417697.1"/>
    <property type="gene ID" value="ENSG00000102181.22"/>
</dbReference>
<dbReference type="GeneID" id="83692"/>
<dbReference type="KEGG" id="hsa:83692"/>
<dbReference type="MANE-Select" id="ENST00000370377.8">
    <property type="protein sequence ID" value="ENSP00000359403.3"/>
    <property type="RefSeq nucleotide sequence ID" value="NM_031462.4"/>
    <property type="RefSeq protein sequence ID" value="NP_113650.2"/>
</dbReference>
<dbReference type="UCSC" id="uc004fek.4">
    <molecule id="Q8TCZ2-1"/>
    <property type="organism name" value="human"/>
</dbReference>
<dbReference type="AGR" id="HGNC:18237"/>
<dbReference type="CTD" id="83692"/>
<dbReference type="DisGeNET" id="83692"/>
<dbReference type="GeneCards" id="CD99L2"/>
<dbReference type="HGNC" id="HGNC:18237">
    <property type="gene designation" value="CD99L2"/>
</dbReference>
<dbReference type="HPA" id="ENSG00000102181">
    <property type="expression patterns" value="Tissue enhanced (skeletal)"/>
</dbReference>
<dbReference type="MIM" id="300846">
    <property type="type" value="gene"/>
</dbReference>
<dbReference type="neXtProt" id="NX_Q8TCZ2"/>
<dbReference type="OpenTargets" id="ENSG00000102181"/>
<dbReference type="PharmGKB" id="PA30805"/>
<dbReference type="VEuPathDB" id="HostDB:ENSG00000102181"/>
<dbReference type="eggNOG" id="ENOG502RZ6C">
    <property type="taxonomic scope" value="Eukaryota"/>
</dbReference>
<dbReference type="GeneTree" id="ENSGT00940000154344"/>
<dbReference type="HOGENOM" id="CLU_092825_0_1_1"/>
<dbReference type="InParanoid" id="Q8TCZ2"/>
<dbReference type="OMA" id="KPDNSFW"/>
<dbReference type="OrthoDB" id="8961553at2759"/>
<dbReference type="PAN-GO" id="Q8TCZ2">
    <property type="GO annotations" value="0 GO annotations based on evolutionary models"/>
</dbReference>
<dbReference type="PhylomeDB" id="Q8TCZ2"/>
<dbReference type="TreeFam" id="TF332323"/>
<dbReference type="PathwayCommons" id="Q8TCZ2"/>
<dbReference type="Reactome" id="R-HSA-202733">
    <property type="pathway name" value="Cell surface interactions at the vascular wall"/>
</dbReference>
<dbReference type="SignaLink" id="Q8TCZ2"/>
<dbReference type="BioGRID-ORCS" id="83692">
    <property type="hits" value="4 hits in 772 CRISPR screens"/>
</dbReference>
<dbReference type="ChiTaRS" id="CD99L2">
    <property type="organism name" value="human"/>
</dbReference>
<dbReference type="GeneWiki" id="CD99L2"/>
<dbReference type="GenomeRNAi" id="83692"/>
<dbReference type="Pharos" id="Q8TCZ2">
    <property type="development level" value="Tbio"/>
</dbReference>
<dbReference type="PRO" id="PR:Q8TCZ2"/>
<dbReference type="Proteomes" id="UP000005640">
    <property type="component" value="Chromosome X"/>
</dbReference>
<dbReference type="RNAct" id="Q8TCZ2">
    <property type="molecule type" value="protein"/>
</dbReference>
<dbReference type="Bgee" id="ENSG00000102181">
    <property type="expression patterns" value="Expressed in prefrontal cortex and 174 other cell types or tissues"/>
</dbReference>
<dbReference type="ExpressionAtlas" id="Q8TCZ2">
    <property type="expression patterns" value="baseline and differential"/>
</dbReference>
<dbReference type="GO" id="GO:0005912">
    <property type="term" value="C:adherens junction"/>
    <property type="evidence" value="ECO:0007669"/>
    <property type="project" value="Ensembl"/>
</dbReference>
<dbReference type="GO" id="GO:0009986">
    <property type="term" value="C:cell surface"/>
    <property type="evidence" value="ECO:0007669"/>
    <property type="project" value="Ensembl"/>
</dbReference>
<dbReference type="GO" id="GO:0005576">
    <property type="term" value="C:extracellular region"/>
    <property type="evidence" value="ECO:0007669"/>
    <property type="project" value="UniProtKB-SubCell"/>
</dbReference>
<dbReference type="GO" id="GO:0005925">
    <property type="term" value="C:focal adhesion"/>
    <property type="evidence" value="ECO:0007005"/>
    <property type="project" value="UniProtKB"/>
</dbReference>
<dbReference type="GO" id="GO:0005886">
    <property type="term" value="C:plasma membrane"/>
    <property type="evidence" value="ECO:0007669"/>
    <property type="project" value="UniProtKB-SubCell"/>
</dbReference>
<dbReference type="GO" id="GO:0007155">
    <property type="term" value="P:cell adhesion"/>
    <property type="evidence" value="ECO:0007669"/>
    <property type="project" value="UniProtKB-KW"/>
</dbReference>
<dbReference type="GO" id="GO:0050904">
    <property type="term" value="P:diapedesis"/>
    <property type="evidence" value="ECO:0007669"/>
    <property type="project" value="Ensembl"/>
</dbReference>
<dbReference type="GO" id="GO:2000391">
    <property type="term" value="P:positive regulation of neutrophil extravasation"/>
    <property type="evidence" value="ECO:0007669"/>
    <property type="project" value="Ensembl"/>
</dbReference>
<dbReference type="GO" id="GO:2000409">
    <property type="term" value="P:positive regulation of T cell extravasation"/>
    <property type="evidence" value="ECO:0007669"/>
    <property type="project" value="Ensembl"/>
</dbReference>
<dbReference type="InterPro" id="IPR022078">
    <property type="entry name" value="CD99L2"/>
</dbReference>
<dbReference type="PANTHER" id="PTHR15076:SF12">
    <property type="entry name" value="CD99 ANTIGEN-LIKE PROTEIN 2"/>
    <property type="match status" value="1"/>
</dbReference>
<dbReference type="PANTHER" id="PTHR15076">
    <property type="entry name" value="CD99/MIC2 PROTEIN RELATED"/>
    <property type="match status" value="1"/>
</dbReference>
<dbReference type="Pfam" id="PF12301">
    <property type="entry name" value="CD99L2"/>
    <property type="match status" value="2"/>
</dbReference>
<reference key="1">
    <citation type="journal article" date="2003" name="Gene">
        <title>Cloning, genomic organization, alternative transcripts and expression analysis of CD99L2, a novel paralog of human CD99, and identification of evolutionary conserved motifs.</title>
        <authorList>
            <person name="Suh Y.H."/>
            <person name="Shin Y.K."/>
            <person name="Kook M.-C."/>
            <person name="Oh K.I."/>
            <person name="Park W.S."/>
            <person name="Kim S.H."/>
            <person name="Lee I.-S."/>
            <person name="Park H.J."/>
            <person name="Huh T.-L."/>
            <person name="Park S.H."/>
        </authorList>
    </citation>
    <scope>NUCLEOTIDE SEQUENCE [MRNA] (ISOFORMS 1; 2 AND 3)</scope>
    <scope>ALTERNATIVE SPLICING</scope>
    <scope>TISSUE SPECIFICITY</scope>
    <source>
        <tissue>Skeletal muscle</tissue>
        <tissue>Thymocyte</tissue>
    </source>
</reference>
<reference key="2">
    <citation type="journal article" date="2001" name="Genome Res.">
        <title>Towards a catalog of human genes and proteins: sequencing and analysis of 500 novel complete protein coding human cDNAs.</title>
        <authorList>
            <person name="Wiemann S."/>
            <person name="Weil B."/>
            <person name="Wellenreuther R."/>
            <person name="Gassenhuber J."/>
            <person name="Glassl S."/>
            <person name="Ansorge W."/>
            <person name="Boecher M."/>
            <person name="Bloecker H."/>
            <person name="Bauersachs S."/>
            <person name="Blum H."/>
            <person name="Lauber J."/>
            <person name="Duesterhoeft A."/>
            <person name="Beyer A."/>
            <person name="Koehrer K."/>
            <person name="Strack N."/>
            <person name="Mewes H.-W."/>
            <person name="Ottenwaelder B."/>
            <person name="Obermaier B."/>
            <person name="Tampe J."/>
            <person name="Heubner D."/>
            <person name="Wambutt R."/>
            <person name="Korn B."/>
            <person name="Klein M."/>
            <person name="Poustka A."/>
        </authorList>
    </citation>
    <scope>NUCLEOTIDE SEQUENCE [LARGE SCALE MRNA] (ISOFORM 1)</scope>
    <source>
        <tissue>Amygdala</tissue>
    </source>
</reference>
<reference key="3">
    <citation type="journal article" date="2003" name="Genome Res.">
        <title>The secreted protein discovery initiative (SPDI), a large-scale effort to identify novel human secreted and transmembrane proteins: a bioinformatics assessment.</title>
        <authorList>
            <person name="Clark H.F."/>
            <person name="Gurney A.L."/>
            <person name="Abaya E."/>
            <person name="Baker K."/>
            <person name="Baldwin D.T."/>
            <person name="Brush J."/>
            <person name="Chen J."/>
            <person name="Chow B."/>
            <person name="Chui C."/>
            <person name="Crowley C."/>
            <person name="Currell B."/>
            <person name="Deuel B."/>
            <person name="Dowd P."/>
            <person name="Eaton D."/>
            <person name="Foster J.S."/>
            <person name="Grimaldi C."/>
            <person name="Gu Q."/>
            <person name="Hass P.E."/>
            <person name="Heldens S."/>
            <person name="Huang A."/>
            <person name="Kim H.S."/>
            <person name="Klimowski L."/>
            <person name="Jin Y."/>
            <person name="Johnson S."/>
            <person name="Lee J."/>
            <person name="Lewis L."/>
            <person name="Liao D."/>
            <person name="Mark M.R."/>
            <person name="Robbie E."/>
            <person name="Sanchez C."/>
            <person name="Schoenfeld J."/>
            <person name="Seshagiri S."/>
            <person name="Simmons L."/>
            <person name="Singh J."/>
            <person name="Smith V."/>
            <person name="Stinson J."/>
            <person name="Vagts A."/>
            <person name="Vandlen R.L."/>
            <person name="Watanabe C."/>
            <person name="Wieand D."/>
            <person name="Woods K."/>
            <person name="Xie M.-H."/>
            <person name="Yansura D.G."/>
            <person name="Yi S."/>
            <person name="Yu G."/>
            <person name="Yuan J."/>
            <person name="Zhang M."/>
            <person name="Zhang Z."/>
            <person name="Goddard A.D."/>
            <person name="Wood W.I."/>
            <person name="Godowski P.J."/>
            <person name="Gray A.M."/>
        </authorList>
    </citation>
    <scope>NUCLEOTIDE SEQUENCE [LARGE SCALE MRNA] (ISOFORM 1)</scope>
</reference>
<reference key="4">
    <citation type="journal article" date="2004" name="Nat. Genet.">
        <title>Complete sequencing and characterization of 21,243 full-length human cDNAs.</title>
        <authorList>
            <person name="Ota T."/>
            <person name="Suzuki Y."/>
            <person name="Nishikawa T."/>
            <person name="Otsuki T."/>
            <person name="Sugiyama T."/>
            <person name="Irie R."/>
            <person name="Wakamatsu A."/>
            <person name="Hayashi K."/>
            <person name="Sato H."/>
            <person name="Nagai K."/>
            <person name="Kimura K."/>
            <person name="Makita H."/>
            <person name="Sekine M."/>
            <person name="Obayashi M."/>
            <person name="Nishi T."/>
            <person name="Shibahara T."/>
            <person name="Tanaka T."/>
            <person name="Ishii S."/>
            <person name="Yamamoto J."/>
            <person name="Saito K."/>
            <person name="Kawai Y."/>
            <person name="Isono Y."/>
            <person name="Nakamura Y."/>
            <person name="Nagahari K."/>
            <person name="Murakami K."/>
            <person name="Yasuda T."/>
            <person name="Iwayanagi T."/>
            <person name="Wagatsuma M."/>
            <person name="Shiratori A."/>
            <person name="Sudo H."/>
            <person name="Hosoiri T."/>
            <person name="Kaku Y."/>
            <person name="Kodaira H."/>
            <person name="Kondo H."/>
            <person name="Sugawara M."/>
            <person name="Takahashi M."/>
            <person name="Kanda K."/>
            <person name="Yokoi T."/>
            <person name="Furuya T."/>
            <person name="Kikkawa E."/>
            <person name="Omura Y."/>
            <person name="Abe K."/>
            <person name="Kamihara K."/>
            <person name="Katsuta N."/>
            <person name="Sato K."/>
            <person name="Tanikawa M."/>
            <person name="Yamazaki M."/>
            <person name="Ninomiya K."/>
            <person name="Ishibashi T."/>
            <person name="Yamashita H."/>
            <person name="Murakawa K."/>
            <person name="Fujimori K."/>
            <person name="Tanai H."/>
            <person name="Kimata M."/>
            <person name="Watanabe M."/>
            <person name="Hiraoka S."/>
            <person name="Chiba Y."/>
            <person name="Ishida S."/>
            <person name="Ono Y."/>
            <person name="Takiguchi S."/>
            <person name="Watanabe S."/>
            <person name="Yosida M."/>
            <person name="Hotuta T."/>
            <person name="Kusano J."/>
            <person name="Kanehori K."/>
            <person name="Takahashi-Fujii A."/>
            <person name="Hara H."/>
            <person name="Tanase T.-O."/>
            <person name="Nomura Y."/>
            <person name="Togiya S."/>
            <person name="Komai F."/>
            <person name="Hara R."/>
            <person name="Takeuchi K."/>
            <person name="Arita M."/>
            <person name="Imose N."/>
            <person name="Musashino K."/>
            <person name="Yuuki H."/>
            <person name="Oshima A."/>
            <person name="Sasaki N."/>
            <person name="Aotsuka S."/>
            <person name="Yoshikawa Y."/>
            <person name="Matsunawa H."/>
            <person name="Ichihara T."/>
            <person name="Shiohata N."/>
            <person name="Sano S."/>
            <person name="Moriya S."/>
            <person name="Momiyama H."/>
            <person name="Satoh N."/>
            <person name="Takami S."/>
            <person name="Terashima Y."/>
            <person name="Suzuki O."/>
            <person name="Nakagawa S."/>
            <person name="Senoh A."/>
            <person name="Mizoguchi H."/>
            <person name="Goto Y."/>
            <person name="Shimizu F."/>
            <person name="Wakebe H."/>
            <person name="Hishigaki H."/>
            <person name="Watanabe T."/>
            <person name="Sugiyama A."/>
            <person name="Takemoto M."/>
            <person name="Kawakami B."/>
            <person name="Yamazaki M."/>
            <person name="Watanabe K."/>
            <person name="Kumagai A."/>
            <person name="Itakura S."/>
            <person name="Fukuzumi Y."/>
            <person name="Fujimori Y."/>
            <person name="Komiyama M."/>
            <person name="Tashiro H."/>
            <person name="Tanigami A."/>
            <person name="Fujiwara T."/>
            <person name="Ono T."/>
            <person name="Yamada K."/>
            <person name="Fujii Y."/>
            <person name="Ozaki K."/>
            <person name="Hirao M."/>
            <person name="Ohmori Y."/>
            <person name="Kawabata A."/>
            <person name="Hikiji T."/>
            <person name="Kobatake N."/>
            <person name="Inagaki H."/>
            <person name="Ikema Y."/>
            <person name="Okamoto S."/>
            <person name="Okitani R."/>
            <person name="Kawakami T."/>
            <person name="Noguchi S."/>
            <person name="Itoh T."/>
            <person name="Shigeta K."/>
            <person name="Senba T."/>
            <person name="Matsumura K."/>
            <person name="Nakajima Y."/>
            <person name="Mizuno T."/>
            <person name="Morinaga M."/>
            <person name="Sasaki M."/>
            <person name="Togashi T."/>
            <person name="Oyama M."/>
            <person name="Hata H."/>
            <person name="Watanabe M."/>
            <person name="Komatsu T."/>
            <person name="Mizushima-Sugano J."/>
            <person name="Satoh T."/>
            <person name="Shirai Y."/>
            <person name="Takahashi Y."/>
            <person name="Nakagawa K."/>
            <person name="Okumura K."/>
            <person name="Nagase T."/>
            <person name="Nomura N."/>
            <person name="Kikuchi H."/>
            <person name="Masuho Y."/>
            <person name="Yamashita R."/>
            <person name="Nakai K."/>
            <person name="Yada T."/>
            <person name="Nakamura Y."/>
            <person name="Ohara O."/>
            <person name="Isogai T."/>
            <person name="Sugano S."/>
        </authorList>
    </citation>
    <scope>NUCLEOTIDE SEQUENCE [LARGE SCALE MRNA] (ISOFORMS 1; 2; 5 AND 6)</scope>
    <source>
        <tissue>Brain</tissue>
        <tissue>Thalamus</tissue>
    </source>
</reference>
<reference key="5">
    <citation type="journal article" date="2005" name="Nature">
        <title>The DNA sequence of the human X chromosome.</title>
        <authorList>
            <person name="Ross M.T."/>
            <person name="Grafham D.V."/>
            <person name="Coffey A.J."/>
            <person name="Scherer S."/>
            <person name="McLay K."/>
            <person name="Muzny D."/>
            <person name="Platzer M."/>
            <person name="Howell G.R."/>
            <person name="Burrows C."/>
            <person name="Bird C.P."/>
            <person name="Frankish A."/>
            <person name="Lovell F.L."/>
            <person name="Howe K.L."/>
            <person name="Ashurst J.L."/>
            <person name="Fulton R.S."/>
            <person name="Sudbrak R."/>
            <person name="Wen G."/>
            <person name="Jones M.C."/>
            <person name="Hurles M.E."/>
            <person name="Andrews T.D."/>
            <person name="Scott C.E."/>
            <person name="Searle S."/>
            <person name="Ramser J."/>
            <person name="Whittaker A."/>
            <person name="Deadman R."/>
            <person name="Carter N.P."/>
            <person name="Hunt S.E."/>
            <person name="Chen R."/>
            <person name="Cree A."/>
            <person name="Gunaratne P."/>
            <person name="Havlak P."/>
            <person name="Hodgson A."/>
            <person name="Metzker M.L."/>
            <person name="Richards S."/>
            <person name="Scott G."/>
            <person name="Steffen D."/>
            <person name="Sodergren E."/>
            <person name="Wheeler D.A."/>
            <person name="Worley K.C."/>
            <person name="Ainscough R."/>
            <person name="Ambrose K.D."/>
            <person name="Ansari-Lari M.A."/>
            <person name="Aradhya S."/>
            <person name="Ashwell R.I."/>
            <person name="Babbage A.K."/>
            <person name="Bagguley C.L."/>
            <person name="Ballabio A."/>
            <person name="Banerjee R."/>
            <person name="Barker G.E."/>
            <person name="Barlow K.F."/>
            <person name="Barrett I.P."/>
            <person name="Bates K.N."/>
            <person name="Beare D.M."/>
            <person name="Beasley H."/>
            <person name="Beasley O."/>
            <person name="Beck A."/>
            <person name="Bethel G."/>
            <person name="Blechschmidt K."/>
            <person name="Brady N."/>
            <person name="Bray-Allen S."/>
            <person name="Bridgeman A.M."/>
            <person name="Brown A.J."/>
            <person name="Brown M.J."/>
            <person name="Bonnin D."/>
            <person name="Bruford E.A."/>
            <person name="Buhay C."/>
            <person name="Burch P."/>
            <person name="Burford D."/>
            <person name="Burgess J."/>
            <person name="Burrill W."/>
            <person name="Burton J."/>
            <person name="Bye J.M."/>
            <person name="Carder C."/>
            <person name="Carrel L."/>
            <person name="Chako J."/>
            <person name="Chapman J.C."/>
            <person name="Chavez D."/>
            <person name="Chen E."/>
            <person name="Chen G."/>
            <person name="Chen Y."/>
            <person name="Chen Z."/>
            <person name="Chinault C."/>
            <person name="Ciccodicola A."/>
            <person name="Clark S.Y."/>
            <person name="Clarke G."/>
            <person name="Clee C.M."/>
            <person name="Clegg S."/>
            <person name="Clerc-Blankenburg K."/>
            <person name="Clifford K."/>
            <person name="Cobley V."/>
            <person name="Cole C.G."/>
            <person name="Conquer J.S."/>
            <person name="Corby N."/>
            <person name="Connor R.E."/>
            <person name="David R."/>
            <person name="Davies J."/>
            <person name="Davis C."/>
            <person name="Davis J."/>
            <person name="Delgado O."/>
            <person name="Deshazo D."/>
            <person name="Dhami P."/>
            <person name="Ding Y."/>
            <person name="Dinh H."/>
            <person name="Dodsworth S."/>
            <person name="Draper H."/>
            <person name="Dugan-Rocha S."/>
            <person name="Dunham A."/>
            <person name="Dunn M."/>
            <person name="Durbin K.J."/>
            <person name="Dutta I."/>
            <person name="Eades T."/>
            <person name="Ellwood M."/>
            <person name="Emery-Cohen A."/>
            <person name="Errington H."/>
            <person name="Evans K.L."/>
            <person name="Faulkner L."/>
            <person name="Francis F."/>
            <person name="Frankland J."/>
            <person name="Fraser A.E."/>
            <person name="Galgoczy P."/>
            <person name="Gilbert J."/>
            <person name="Gill R."/>
            <person name="Gloeckner G."/>
            <person name="Gregory S.G."/>
            <person name="Gribble S."/>
            <person name="Griffiths C."/>
            <person name="Grocock R."/>
            <person name="Gu Y."/>
            <person name="Gwilliam R."/>
            <person name="Hamilton C."/>
            <person name="Hart E.A."/>
            <person name="Hawes A."/>
            <person name="Heath P.D."/>
            <person name="Heitmann K."/>
            <person name="Hennig S."/>
            <person name="Hernandez J."/>
            <person name="Hinzmann B."/>
            <person name="Ho S."/>
            <person name="Hoffs M."/>
            <person name="Howden P.J."/>
            <person name="Huckle E.J."/>
            <person name="Hume J."/>
            <person name="Hunt P.J."/>
            <person name="Hunt A.R."/>
            <person name="Isherwood J."/>
            <person name="Jacob L."/>
            <person name="Johnson D."/>
            <person name="Jones S."/>
            <person name="de Jong P.J."/>
            <person name="Joseph S.S."/>
            <person name="Keenan S."/>
            <person name="Kelly S."/>
            <person name="Kershaw J.K."/>
            <person name="Khan Z."/>
            <person name="Kioschis P."/>
            <person name="Klages S."/>
            <person name="Knights A.J."/>
            <person name="Kosiura A."/>
            <person name="Kovar-Smith C."/>
            <person name="Laird G.K."/>
            <person name="Langford C."/>
            <person name="Lawlor S."/>
            <person name="Leversha M."/>
            <person name="Lewis L."/>
            <person name="Liu W."/>
            <person name="Lloyd C."/>
            <person name="Lloyd D.M."/>
            <person name="Loulseged H."/>
            <person name="Loveland J.E."/>
            <person name="Lovell J.D."/>
            <person name="Lozado R."/>
            <person name="Lu J."/>
            <person name="Lyne R."/>
            <person name="Ma J."/>
            <person name="Maheshwari M."/>
            <person name="Matthews L.H."/>
            <person name="McDowall J."/>
            <person name="McLaren S."/>
            <person name="McMurray A."/>
            <person name="Meidl P."/>
            <person name="Meitinger T."/>
            <person name="Milne S."/>
            <person name="Miner G."/>
            <person name="Mistry S.L."/>
            <person name="Morgan M."/>
            <person name="Morris S."/>
            <person name="Mueller I."/>
            <person name="Mullikin J.C."/>
            <person name="Nguyen N."/>
            <person name="Nordsiek G."/>
            <person name="Nyakatura G."/>
            <person name="O'dell C.N."/>
            <person name="Okwuonu G."/>
            <person name="Palmer S."/>
            <person name="Pandian R."/>
            <person name="Parker D."/>
            <person name="Parrish J."/>
            <person name="Pasternak S."/>
            <person name="Patel D."/>
            <person name="Pearce A.V."/>
            <person name="Pearson D.M."/>
            <person name="Pelan S.E."/>
            <person name="Perez L."/>
            <person name="Porter K.M."/>
            <person name="Ramsey Y."/>
            <person name="Reichwald K."/>
            <person name="Rhodes S."/>
            <person name="Ridler K.A."/>
            <person name="Schlessinger D."/>
            <person name="Schueler M.G."/>
            <person name="Sehra H.K."/>
            <person name="Shaw-Smith C."/>
            <person name="Shen H."/>
            <person name="Sheridan E.M."/>
            <person name="Shownkeen R."/>
            <person name="Skuce C.D."/>
            <person name="Smith M.L."/>
            <person name="Sotheran E.C."/>
            <person name="Steingruber H.E."/>
            <person name="Steward C.A."/>
            <person name="Storey R."/>
            <person name="Swann R.M."/>
            <person name="Swarbreck D."/>
            <person name="Tabor P.E."/>
            <person name="Taudien S."/>
            <person name="Taylor T."/>
            <person name="Teague B."/>
            <person name="Thomas K."/>
            <person name="Thorpe A."/>
            <person name="Timms K."/>
            <person name="Tracey A."/>
            <person name="Trevanion S."/>
            <person name="Tromans A.C."/>
            <person name="d'Urso M."/>
            <person name="Verduzco D."/>
            <person name="Villasana D."/>
            <person name="Waldron L."/>
            <person name="Wall M."/>
            <person name="Wang Q."/>
            <person name="Warren J."/>
            <person name="Warry G.L."/>
            <person name="Wei X."/>
            <person name="West A."/>
            <person name="Whitehead S.L."/>
            <person name="Whiteley M.N."/>
            <person name="Wilkinson J.E."/>
            <person name="Willey D.L."/>
            <person name="Williams G."/>
            <person name="Williams L."/>
            <person name="Williamson A."/>
            <person name="Williamson H."/>
            <person name="Wilming L."/>
            <person name="Woodmansey R.L."/>
            <person name="Wray P.W."/>
            <person name="Yen J."/>
            <person name="Zhang J."/>
            <person name="Zhou J."/>
            <person name="Zoghbi H."/>
            <person name="Zorilla S."/>
            <person name="Buck D."/>
            <person name="Reinhardt R."/>
            <person name="Poustka A."/>
            <person name="Rosenthal A."/>
            <person name="Lehrach H."/>
            <person name="Meindl A."/>
            <person name="Minx P.J."/>
            <person name="Hillier L.W."/>
            <person name="Willard H.F."/>
            <person name="Wilson R.K."/>
            <person name="Waterston R.H."/>
            <person name="Rice C.M."/>
            <person name="Vaudin M."/>
            <person name="Coulson A."/>
            <person name="Nelson D.L."/>
            <person name="Weinstock G."/>
            <person name="Sulston J.E."/>
            <person name="Durbin R.M."/>
            <person name="Hubbard T."/>
            <person name="Gibbs R.A."/>
            <person name="Beck S."/>
            <person name="Rogers J."/>
            <person name="Bentley D.R."/>
        </authorList>
    </citation>
    <scope>NUCLEOTIDE SEQUENCE [LARGE SCALE GENOMIC DNA]</scope>
</reference>
<reference key="6">
    <citation type="submission" date="2005-07" db="EMBL/GenBank/DDBJ databases">
        <authorList>
            <person name="Mural R.J."/>
            <person name="Istrail S."/>
            <person name="Sutton G.G."/>
            <person name="Florea L."/>
            <person name="Halpern A.L."/>
            <person name="Mobarry C.M."/>
            <person name="Lippert R."/>
            <person name="Walenz B."/>
            <person name="Shatkay H."/>
            <person name="Dew I."/>
            <person name="Miller J.R."/>
            <person name="Flanigan M.J."/>
            <person name="Edwards N.J."/>
            <person name="Bolanos R."/>
            <person name="Fasulo D."/>
            <person name="Halldorsson B.V."/>
            <person name="Hannenhalli S."/>
            <person name="Turner R."/>
            <person name="Yooseph S."/>
            <person name="Lu F."/>
            <person name="Nusskern D.R."/>
            <person name="Shue B.C."/>
            <person name="Zheng X.H."/>
            <person name="Zhong F."/>
            <person name="Delcher A.L."/>
            <person name="Huson D.H."/>
            <person name="Kravitz S.A."/>
            <person name="Mouchard L."/>
            <person name="Reinert K."/>
            <person name="Remington K.A."/>
            <person name="Clark A.G."/>
            <person name="Waterman M.S."/>
            <person name="Eichler E.E."/>
            <person name="Adams M.D."/>
            <person name="Hunkapiller M.W."/>
            <person name="Myers E.W."/>
            <person name="Venter J.C."/>
        </authorList>
    </citation>
    <scope>NUCLEOTIDE SEQUENCE [LARGE SCALE GENOMIC DNA]</scope>
</reference>
<reference key="7">
    <citation type="journal article" date="2004" name="Genome Res.">
        <title>The status, quality, and expansion of the NIH full-length cDNA project: the Mammalian Gene Collection (MGC).</title>
        <authorList>
            <consortium name="The MGC Project Team"/>
        </authorList>
    </citation>
    <scope>NUCLEOTIDE SEQUENCE [LARGE SCALE MRNA] (ISOFORMS 1 AND 4)</scope>
    <source>
        <tissue>Brain</tissue>
        <tissue>Lung</tissue>
    </source>
</reference>
<reference key="8">
    <citation type="journal article" date="2010" name="Sci. Signal.">
        <title>Quantitative phosphoproteomics reveals widespread full phosphorylation site occupancy during mitosis.</title>
        <authorList>
            <person name="Olsen J.V."/>
            <person name="Vermeulen M."/>
            <person name="Santamaria A."/>
            <person name="Kumar C."/>
            <person name="Miller M.L."/>
            <person name="Jensen L.J."/>
            <person name="Gnad F."/>
            <person name="Cox J."/>
            <person name="Jensen T.S."/>
            <person name="Nigg E.A."/>
            <person name="Brunak S."/>
            <person name="Mann M."/>
        </authorList>
    </citation>
    <scope>IDENTIFICATION BY MASS SPECTROMETRY [LARGE SCALE ANALYSIS]</scope>
    <source>
        <tissue>Cervix carcinoma</tissue>
    </source>
</reference>
<reference key="9">
    <citation type="journal article" date="2015" name="Mol. Cell. Proteomics">
        <title>Identification of chondroitin sulfate linkage region glycopeptides reveals prohormones as a novel class of proteoglycans.</title>
        <authorList>
            <person name="Noborn F."/>
            <person name="Gomez Toledo A."/>
            <person name="Sihlbom C."/>
            <person name="Lengqvist J."/>
            <person name="Fries E."/>
            <person name="Kjellen L."/>
            <person name="Nilsson J."/>
            <person name="Larson G."/>
        </authorList>
    </citation>
    <scope>SUBCELLULAR LOCATION</scope>
    <scope>TISSUE SPECIFICITY</scope>
    <scope>GLYCOSYLATION AT SER-178</scope>
</reference>
<reference key="10">
    <citation type="journal article" date="2015" name="Proteomics">
        <title>N-terminome analysis of the human mitochondrial proteome.</title>
        <authorList>
            <person name="Vaca Jacome A.S."/>
            <person name="Rabilloud T."/>
            <person name="Schaeffer-Reiss C."/>
            <person name="Rompais M."/>
            <person name="Ayoub D."/>
            <person name="Lane L."/>
            <person name="Bairoch A."/>
            <person name="Van Dorsselaer A."/>
            <person name="Carapito C."/>
        </authorList>
    </citation>
    <scope>IDENTIFICATION BY MASS SPECTROMETRY [LARGE SCALE ANALYSIS]</scope>
</reference>
<feature type="signal peptide" evidence="2">
    <location>
        <begin position="1"/>
        <end position="25"/>
    </location>
</feature>
<feature type="chain" id="PRO_0000340092" description="CD99 antigen-like protein 2">
    <location>
        <begin position="26"/>
        <end position="262"/>
    </location>
</feature>
<feature type="topological domain" description="Extracellular" evidence="2">
    <location>
        <begin position="26"/>
        <end position="185"/>
    </location>
</feature>
<feature type="transmembrane region" description="Helical" evidence="2">
    <location>
        <begin position="186"/>
        <end position="206"/>
    </location>
</feature>
<feature type="topological domain" description="Cytoplasmic" evidence="2">
    <location>
        <begin position="207"/>
        <end position="262"/>
    </location>
</feature>
<feature type="region of interest" description="Disordered" evidence="3">
    <location>
        <begin position="38"/>
        <end position="181"/>
    </location>
</feature>
<feature type="compositionally biased region" description="Low complexity" evidence="3">
    <location>
        <begin position="49"/>
        <end position="60"/>
    </location>
</feature>
<feature type="compositionally biased region" description="Low complexity" evidence="3">
    <location>
        <begin position="98"/>
        <end position="119"/>
    </location>
</feature>
<feature type="compositionally biased region" description="Basic and acidic residues" evidence="3">
    <location>
        <begin position="125"/>
        <end position="136"/>
    </location>
</feature>
<feature type="compositionally biased region" description="Basic and acidic residues" evidence="3">
    <location>
        <begin position="159"/>
        <end position="168"/>
    </location>
</feature>
<feature type="glycosylation site" description="O-linked (Xyl...) (chondroitin sulfate) serine" evidence="5">
    <location>
        <position position="178"/>
    </location>
</feature>
<feature type="splice variant" id="VSP_034181" description="In isoform 4." evidence="8">
    <original>QPWDHTTTTTTNRPGTTRAPAKPPGSGLDLADALDDQDDGRRKPGIGGRERWNHVTTTTKRPVTTRAPANTLGNDFDLADALDDRNDRDDGRRKPIAGGGGF</original>
    <variation>PALGMYHKLDGLKQQNFILSLFWMLEVLYQGVGWATFSLKALGKNLSLTFPTSGGSRCSLVCGCITPISASVVTWCSPFCVSLLSLTKMLVSGFKAHLDNPG</variation>
    <location>
        <begin position="44"/>
        <end position="145"/>
    </location>
</feature>
<feature type="splice variant" id="VSP_034182" description="In isoform 3." evidence="6">
    <original>Q</original>
    <variation>R</variation>
    <location>
        <position position="44"/>
    </location>
</feature>
<feature type="splice variant" id="VSP_034183" description="In isoform 3." evidence="6">
    <location>
        <begin position="45"/>
        <end position="116"/>
    </location>
</feature>
<feature type="splice variant" id="VSP_034184" description="In isoform 2." evidence="6 7">
    <location>
        <begin position="45"/>
        <end position="93"/>
    </location>
</feature>
<feature type="splice variant" id="VSP_041815" description="In isoform 5." evidence="7">
    <original>G</original>
    <variation>GPTEG</variation>
    <location>
        <position position="68"/>
    </location>
</feature>
<feature type="splice variant" id="VSP_044663" description="In isoform 6." evidence="7">
    <location>
        <begin position="93"/>
        <end position="165"/>
    </location>
</feature>
<feature type="splice variant" id="VSP_034185" description="In isoform 4." evidence="8">
    <location>
        <begin position="146"/>
        <end position="262"/>
    </location>
</feature>
<feature type="splice variant" id="VSP_041816" description="In isoform 5." evidence="7">
    <original>QQ</original>
    <variation>QHAAAGQE</variation>
    <location>
        <begin position="218"/>
        <end position="219"/>
    </location>
</feature>
<feature type="sequence conflict" description="In Ref. 4; BAF82889." evidence="9" ref="4">
    <original>R</original>
    <variation>I</variation>
    <location>
        <position position="109"/>
    </location>
</feature>
<feature type="sequence conflict" description="In Ref. 4; BAG54124." evidence="9" ref="4">
    <original>R</original>
    <variation>Q</variation>
    <location>
        <position position="128"/>
    </location>
</feature>
<feature type="sequence conflict" description="In Ref. 4; BAF82889." evidence="9" ref="4">
    <original>Y</original>
    <variation>H</variation>
    <location>
        <position position="170"/>
    </location>
</feature>
<feature type="sequence conflict" description="In Ref. 4; BAF84064." evidence="9" ref="4">
    <original>P</original>
    <variation>R</variation>
    <location>
        <position position="176"/>
    </location>
</feature>
<feature type="sequence conflict" description="In Ref. 4; BAG56778." evidence="9" ref="4">
    <original>E</original>
    <variation>G</variation>
    <location>
        <position position="229"/>
    </location>
</feature>
<comment type="function">
    <text evidence="1">Plays a role in a late step of leukocyte extravasation helping cells to overcome the endothelial basement membrane. Acts at the same site as, but independently of, PECAM1 (By similarity). Homophilic adhesion molecule, but these interactions may not be required for cell aggregation (By similarity).</text>
</comment>
<comment type="interaction">
    <interactant intactId="EBI-2824782">
        <id>Q8TCZ2</id>
    </interactant>
    <interactant intactId="EBI-347996">
        <id>O43765</id>
        <label>SGTA</label>
    </interactant>
    <organismsDiffer>false</organismsDiffer>
    <experiments>8</experiments>
</comment>
<comment type="interaction">
    <interactant intactId="EBI-2824782">
        <id>Q8TCZ2</id>
    </interactant>
    <interactant intactId="EBI-744081">
        <id>Q96EQ0</id>
        <label>SGTB</label>
    </interactant>
    <organismsDiffer>false</organismsDiffer>
    <experiments>6</experiments>
</comment>
<comment type="interaction">
    <interactant intactId="EBI-2824782">
        <id>Q8TCZ2</id>
    </interactant>
    <interactant intactId="EBI-10262251">
        <id>Q8IWU4</id>
        <label>SLC30A8</label>
    </interactant>
    <organismsDiffer>false</organismsDiffer>
    <experiments>3</experiments>
</comment>
<comment type="interaction">
    <interactant intactId="EBI-2824782">
        <id>Q8TCZ2</id>
    </interactant>
    <interactant intactId="EBI-1045825">
        <id>P55061</id>
        <label>TMBIM6</label>
    </interactant>
    <organismsDiffer>false</organismsDiffer>
    <experiments>3</experiments>
</comment>
<comment type="interaction">
    <interactant intactId="EBI-2824782">
        <id>Q8TCZ2</id>
    </interactant>
    <interactant intactId="EBI-11996766">
        <id>Q8N609</id>
        <label>TRAM1L1</label>
    </interactant>
    <organismsDiffer>false</organismsDiffer>
    <experiments>3</experiments>
</comment>
<comment type="interaction">
    <interactant intactId="EBI-2824782">
        <id>Q8TCZ2</id>
    </interactant>
    <interactant intactId="EBI-741480">
        <id>Q9UMX0</id>
        <label>UBQLN1</label>
    </interactant>
    <organismsDiffer>false</organismsDiffer>
    <experiments>6</experiments>
</comment>
<comment type="interaction">
    <interactant intactId="EBI-2824782">
        <id>Q8TCZ2</id>
    </interactant>
    <interactant intactId="EBI-10173939">
        <id>Q9UMX0-2</id>
        <label>UBQLN1</label>
    </interactant>
    <organismsDiffer>false</organismsDiffer>
    <experiments>6</experiments>
</comment>
<comment type="interaction">
    <interactant intactId="EBI-2824782">
        <id>Q8TCZ2</id>
    </interactant>
    <interactant intactId="EBI-947187">
        <id>Q9UHD9</id>
        <label>UBQLN2</label>
    </interactant>
    <organismsDiffer>false</organismsDiffer>
    <experiments>3</experiments>
</comment>
<comment type="subcellular location">
    <subcellularLocation>
        <location evidence="1">Cell membrane</location>
        <topology evidence="1">Single-pass type I membrane protein</topology>
        <orientation evidence="1">Extracellular side</orientation>
    </subcellularLocation>
    <subcellularLocation>
        <location evidence="1">Cell junction</location>
    </subcellularLocation>
    <subcellularLocation>
        <location evidence="5">Secreted</location>
    </subcellularLocation>
</comment>
<comment type="alternative products">
    <event type="alternative splicing"/>
    <isoform>
        <id>Q8TCZ2-1</id>
        <name>1</name>
        <sequence type="displayed"/>
    </isoform>
    <isoform>
        <id>Q8TCZ2-2</id>
        <name>2</name>
        <sequence type="described" ref="VSP_034184"/>
    </isoform>
    <isoform>
        <id>Q8TCZ2-3</id>
        <name>3</name>
        <sequence type="described" ref="VSP_034182 VSP_034183"/>
    </isoform>
    <isoform>
        <id>Q8TCZ2-4</id>
        <name>4</name>
        <sequence type="described" ref="VSP_034181 VSP_034185"/>
    </isoform>
    <isoform>
        <id>Q8TCZ2-5</id>
        <name>5</name>
        <sequence type="described" ref="VSP_041815 VSP_041816"/>
    </isoform>
    <isoform>
        <id>Q8TCZ2-6</id>
        <name>6</name>
        <sequence type="described" ref="VSP_044663"/>
    </isoform>
</comment>
<comment type="tissue specificity">
    <text evidence="4 5">Detected in cerebrospinal fluid (at protein level) (PubMed:25326458). Expressed in many tissues, with low expression in thymus.</text>
</comment>
<comment type="PTM">
    <text evidence="5">O-glycosylated.</text>
</comment>
<comment type="similarity">
    <text evidence="9">Belongs to the CD99 family.</text>
</comment>
<comment type="sequence caution" evidence="9">
    <conflict type="frameshift">
        <sequence resource="EMBL-CDS" id="CAB66515"/>
    </conflict>
</comment>